<protein>
    <recommendedName>
        <fullName evidence="1">Transaldolase</fullName>
        <ecNumber evidence="1">2.2.1.2</ecNumber>
    </recommendedName>
</protein>
<accession>Q47ND3</accession>
<reference key="1">
    <citation type="journal article" date="2007" name="J. Bacteriol.">
        <title>Genome sequence and analysis of the soil cellulolytic actinomycete Thermobifida fusca YX.</title>
        <authorList>
            <person name="Lykidis A."/>
            <person name="Mavromatis K."/>
            <person name="Ivanova N."/>
            <person name="Anderson I."/>
            <person name="Land M."/>
            <person name="DiBartolo G."/>
            <person name="Martinez M."/>
            <person name="Lapidus A."/>
            <person name="Lucas S."/>
            <person name="Copeland A."/>
            <person name="Richardson P."/>
            <person name="Wilson D.B."/>
            <person name="Kyrpides N."/>
        </authorList>
    </citation>
    <scope>NUCLEOTIDE SEQUENCE [LARGE SCALE GENOMIC DNA]</scope>
    <source>
        <strain>YX</strain>
    </source>
</reference>
<proteinExistence type="inferred from homology"/>
<comment type="function">
    <text evidence="1">Transaldolase is important for the balance of metabolites in the pentose-phosphate pathway.</text>
</comment>
<comment type="catalytic activity">
    <reaction evidence="1">
        <text>D-sedoheptulose 7-phosphate + D-glyceraldehyde 3-phosphate = D-erythrose 4-phosphate + beta-D-fructose 6-phosphate</text>
        <dbReference type="Rhea" id="RHEA:17053"/>
        <dbReference type="ChEBI" id="CHEBI:16897"/>
        <dbReference type="ChEBI" id="CHEBI:57483"/>
        <dbReference type="ChEBI" id="CHEBI:57634"/>
        <dbReference type="ChEBI" id="CHEBI:59776"/>
        <dbReference type="EC" id="2.2.1.2"/>
    </reaction>
</comment>
<comment type="pathway">
    <text evidence="1">Carbohydrate degradation; pentose phosphate pathway; D-glyceraldehyde 3-phosphate and beta-D-fructose 6-phosphate from D-ribose 5-phosphate and D-xylulose 5-phosphate (non-oxidative stage): step 2/3.</text>
</comment>
<comment type="subcellular location">
    <subcellularLocation>
        <location evidence="1">Cytoplasm</location>
    </subcellularLocation>
</comment>
<comment type="similarity">
    <text evidence="1">Belongs to the transaldolase family. Type 2 subfamily.</text>
</comment>
<evidence type="ECO:0000255" key="1">
    <source>
        <dbReference type="HAMAP-Rule" id="MF_00493"/>
    </source>
</evidence>
<keyword id="KW-0963">Cytoplasm</keyword>
<keyword id="KW-0570">Pentose shunt</keyword>
<keyword id="KW-0704">Schiff base</keyword>
<keyword id="KW-0808">Transferase</keyword>
<feature type="chain" id="PRO_1000026531" description="Transaldolase">
    <location>
        <begin position="1"/>
        <end position="368"/>
    </location>
</feature>
<feature type="active site" description="Schiff-base intermediate with substrate" evidence="1">
    <location>
        <position position="140"/>
    </location>
</feature>
<dbReference type="EC" id="2.2.1.2" evidence="1"/>
<dbReference type="EMBL" id="CP000088">
    <property type="protein sequence ID" value="AAZ56036.1"/>
    <property type="molecule type" value="Genomic_DNA"/>
</dbReference>
<dbReference type="RefSeq" id="WP_011292426.1">
    <property type="nucleotide sequence ID" value="NC_007333.1"/>
</dbReference>
<dbReference type="SMR" id="Q47ND3"/>
<dbReference type="STRING" id="269800.Tfu_2003"/>
<dbReference type="KEGG" id="tfu:Tfu_2003"/>
<dbReference type="eggNOG" id="COG0176">
    <property type="taxonomic scope" value="Bacteria"/>
</dbReference>
<dbReference type="HOGENOM" id="CLU_050771_1_0_11"/>
<dbReference type="OrthoDB" id="9809101at2"/>
<dbReference type="UniPathway" id="UPA00115">
    <property type="reaction ID" value="UER00414"/>
</dbReference>
<dbReference type="GO" id="GO:0005737">
    <property type="term" value="C:cytoplasm"/>
    <property type="evidence" value="ECO:0007669"/>
    <property type="project" value="UniProtKB-SubCell"/>
</dbReference>
<dbReference type="GO" id="GO:0004801">
    <property type="term" value="F:transaldolase activity"/>
    <property type="evidence" value="ECO:0007669"/>
    <property type="project" value="UniProtKB-UniRule"/>
</dbReference>
<dbReference type="GO" id="GO:0005975">
    <property type="term" value="P:carbohydrate metabolic process"/>
    <property type="evidence" value="ECO:0007669"/>
    <property type="project" value="InterPro"/>
</dbReference>
<dbReference type="GO" id="GO:0006098">
    <property type="term" value="P:pentose-phosphate shunt"/>
    <property type="evidence" value="ECO:0007669"/>
    <property type="project" value="UniProtKB-UniRule"/>
</dbReference>
<dbReference type="CDD" id="cd00955">
    <property type="entry name" value="Transaldolase_like"/>
    <property type="match status" value="1"/>
</dbReference>
<dbReference type="Gene3D" id="3.20.20.70">
    <property type="entry name" value="Aldolase class I"/>
    <property type="match status" value="1"/>
</dbReference>
<dbReference type="HAMAP" id="MF_00493">
    <property type="entry name" value="Transaldolase_2"/>
    <property type="match status" value="1"/>
</dbReference>
<dbReference type="InterPro" id="IPR013785">
    <property type="entry name" value="Aldolase_TIM"/>
</dbReference>
<dbReference type="InterPro" id="IPR001585">
    <property type="entry name" value="TAL/FSA"/>
</dbReference>
<dbReference type="InterPro" id="IPR004732">
    <property type="entry name" value="Transaldolase_2"/>
</dbReference>
<dbReference type="InterPro" id="IPR018225">
    <property type="entry name" value="Transaldolase_AS"/>
</dbReference>
<dbReference type="NCBIfam" id="NF002881">
    <property type="entry name" value="PRK03343.1"/>
    <property type="match status" value="1"/>
</dbReference>
<dbReference type="NCBIfam" id="TIGR00876">
    <property type="entry name" value="tal_mycobact"/>
    <property type="match status" value="1"/>
</dbReference>
<dbReference type="PANTHER" id="PTHR10683">
    <property type="entry name" value="TRANSALDOLASE"/>
    <property type="match status" value="1"/>
</dbReference>
<dbReference type="PANTHER" id="PTHR10683:SF31">
    <property type="entry name" value="TRANSALDOLASE"/>
    <property type="match status" value="1"/>
</dbReference>
<dbReference type="Pfam" id="PF00923">
    <property type="entry name" value="TAL_FSA"/>
    <property type="match status" value="1"/>
</dbReference>
<dbReference type="PIRSF" id="PIRSF036915">
    <property type="entry name" value="Trnald_Bac_Plnt"/>
    <property type="match status" value="1"/>
</dbReference>
<dbReference type="SUPFAM" id="SSF51569">
    <property type="entry name" value="Aldolase"/>
    <property type="match status" value="1"/>
</dbReference>
<dbReference type="PROSITE" id="PS01054">
    <property type="entry name" value="TRANSALDOLASE_1"/>
    <property type="match status" value="1"/>
</dbReference>
<name>TAL_THEFY</name>
<gene>
    <name evidence="1" type="primary">tal</name>
    <name type="ordered locus">Tfu_2003</name>
</gene>
<sequence length="368" mass="39832">MGSPLQQLSDAGVAVWLDDISRQRLRSGNLAELIAQRNVVGVTSNPTIFAKALAEGDAYDGQLRDLAVRGVSVEEAVRLITAYDIRWAADVLRPVYEATDGVDGRVSLEVDPRLARDTERTVAEARALWWLVDRPNLMIKIPATVEGLPAITAALAEGISVNVTLIFSLERYRAVMDAFLAGLEQAQQAGRDLSTIHSVASFFVSRVDTEVDKRLSKIATEEAVALRGKTALANARLAYAAYEEVFSSARWTALAQAGARPQRPLWASTGVKDPELPDTLYVTELVAPGTVNTMPQATLDAVADHGTITGDTVRGHYDAARAHLDAVESVGVSMSDVVETLEDEGVDKFVKSWEELLDRVAQQLAAHT</sequence>
<organism>
    <name type="scientific">Thermobifida fusca (strain YX)</name>
    <dbReference type="NCBI Taxonomy" id="269800"/>
    <lineage>
        <taxon>Bacteria</taxon>
        <taxon>Bacillati</taxon>
        <taxon>Actinomycetota</taxon>
        <taxon>Actinomycetes</taxon>
        <taxon>Streptosporangiales</taxon>
        <taxon>Nocardiopsidaceae</taxon>
        <taxon>Thermobifida</taxon>
    </lineage>
</organism>